<organism>
    <name type="scientific">Olea europaea</name>
    <name type="common">Common olive</name>
    <dbReference type="NCBI Taxonomy" id="4146"/>
    <lineage>
        <taxon>Eukaryota</taxon>
        <taxon>Viridiplantae</taxon>
        <taxon>Streptophyta</taxon>
        <taxon>Embryophyta</taxon>
        <taxon>Tracheophyta</taxon>
        <taxon>Spermatophyta</taxon>
        <taxon>Magnoliopsida</taxon>
        <taxon>eudicotyledons</taxon>
        <taxon>Gunneridae</taxon>
        <taxon>Pentapetalae</taxon>
        <taxon>asterids</taxon>
        <taxon>lamiids</taxon>
        <taxon>Lamiales</taxon>
        <taxon>Oleaceae</taxon>
        <taxon>Oleeae</taxon>
        <taxon>Olea</taxon>
    </lineage>
</organism>
<protein>
    <recommendedName>
        <fullName>Profilin-3</fullName>
    </recommendedName>
    <alternativeName>
        <fullName>Pollen allergen Ole e 2</fullName>
    </alternativeName>
    <allergenName>Ole e 2</allergenName>
</protein>
<sequence length="134" mass="14457">MSWQTYVDDHLMCDIEGHEGHRLTAAAIVGHDGSVWAQSATFPQFKPEEMNGIMTDFNEPGHLAPTGLHLGGTKYMVIQGEAGAVIRGKKGSGGITIKKTGQALVFGIYEEPVTPGQCNMVVERLGDYLLEQGL</sequence>
<accession>A4GDU2</accession>
<proteinExistence type="evidence at protein level"/>
<dbReference type="EMBL" id="DQ138360">
    <property type="protein sequence ID" value="AAZ30438.1"/>
    <property type="molecule type" value="mRNA"/>
</dbReference>
<dbReference type="SMR" id="A4GDU2"/>
<dbReference type="Allergome" id="490">
    <property type="allergen name" value="Ole e 2"/>
</dbReference>
<dbReference type="GO" id="GO:0005938">
    <property type="term" value="C:cell cortex"/>
    <property type="evidence" value="ECO:0007669"/>
    <property type="project" value="TreeGrafter"/>
</dbReference>
<dbReference type="GO" id="GO:0005856">
    <property type="term" value="C:cytoskeleton"/>
    <property type="evidence" value="ECO:0007669"/>
    <property type="project" value="UniProtKB-SubCell"/>
</dbReference>
<dbReference type="GO" id="GO:0003785">
    <property type="term" value="F:actin monomer binding"/>
    <property type="evidence" value="ECO:0007669"/>
    <property type="project" value="TreeGrafter"/>
</dbReference>
<dbReference type="CDD" id="cd00148">
    <property type="entry name" value="PROF"/>
    <property type="match status" value="1"/>
</dbReference>
<dbReference type="FunFam" id="3.30.450.30:FF:000001">
    <property type="entry name" value="Profilin"/>
    <property type="match status" value="1"/>
</dbReference>
<dbReference type="Gene3D" id="3.30.450.30">
    <property type="entry name" value="Dynein light chain 2a, cytoplasmic"/>
    <property type="match status" value="1"/>
</dbReference>
<dbReference type="InterPro" id="IPR048278">
    <property type="entry name" value="PFN"/>
</dbReference>
<dbReference type="InterPro" id="IPR005455">
    <property type="entry name" value="PFN_euk"/>
</dbReference>
<dbReference type="InterPro" id="IPR036140">
    <property type="entry name" value="PFN_sf"/>
</dbReference>
<dbReference type="InterPro" id="IPR027310">
    <property type="entry name" value="Profilin_CS"/>
</dbReference>
<dbReference type="PANTHER" id="PTHR11604">
    <property type="entry name" value="PROFILIN"/>
    <property type="match status" value="1"/>
</dbReference>
<dbReference type="PANTHER" id="PTHR11604:SF25">
    <property type="entry name" value="PROFILIN-5"/>
    <property type="match status" value="1"/>
</dbReference>
<dbReference type="Pfam" id="PF00235">
    <property type="entry name" value="Profilin"/>
    <property type="match status" value="1"/>
</dbReference>
<dbReference type="PRINTS" id="PR00392">
    <property type="entry name" value="PROFILIN"/>
</dbReference>
<dbReference type="PRINTS" id="PR01640">
    <property type="entry name" value="PROFILINPLNT"/>
</dbReference>
<dbReference type="SMART" id="SM00392">
    <property type="entry name" value="PROF"/>
    <property type="match status" value="1"/>
</dbReference>
<dbReference type="SUPFAM" id="SSF55770">
    <property type="entry name" value="Profilin (actin-binding protein)"/>
    <property type="match status" value="1"/>
</dbReference>
<dbReference type="PROSITE" id="PS00414">
    <property type="entry name" value="PROFILIN"/>
    <property type="match status" value="1"/>
</dbReference>
<keyword id="KW-0009">Actin-binding</keyword>
<keyword id="KW-0020">Allergen</keyword>
<keyword id="KW-0963">Cytoplasm</keyword>
<keyword id="KW-0206">Cytoskeleton</keyword>
<keyword id="KW-1015">Disulfide bond</keyword>
<keyword id="KW-0597">Phosphoprotein</keyword>
<reference key="1">
    <citation type="journal article" date="2012" name="PLoS ONE">
        <title>Characterization of profilin polymorphism in pollen with a focus on multifunctionality.</title>
        <authorList>
            <person name="Jimenez-Lopez J.C."/>
            <person name="Morales S."/>
            <person name="Castro A.J."/>
            <person name="Volkmann D."/>
            <person name="Rodriguez-Garcia M.I."/>
            <person name="Alche Jde D."/>
        </authorList>
    </citation>
    <scope>NUCLEOTIDE SEQUENCE [MRNA]</scope>
    <scope>POLYMORPHISM</scope>
    <source>
        <strain>cv. Verdial de Velez-Malaga</strain>
    </source>
</reference>
<reference key="2">
    <citation type="journal article" date="2013" name="PLoS ONE">
        <title>Analysis of the effects of polymorphism on pollen profilin structural functionality and the generation of conformational, T- and B-cell epitopes.</title>
        <authorList>
            <person name="Jimenez-Lopez J.C."/>
            <person name="Rodriguez-Garcia M.I."/>
            <person name="Alche J.D."/>
        </authorList>
    </citation>
    <scope>3D-STRUCTURE MODELING</scope>
    <scope>DISULFIDE BOND</scope>
</reference>
<comment type="function">
    <text evidence="1">Binds to actin and affects the structure of the cytoskeleton. At high concentrations, profilin prevents the polymerization of actin, whereas it enhances it at low concentrations (By similarity).</text>
</comment>
<comment type="subunit">
    <text evidence="1">Occurs in many kinds of cells as a complex with monomeric actin in a 1:1 ratio.</text>
</comment>
<comment type="subcellular location">
    <subcellularLocation>
        <location evidence="1">Cytoplasm</location>
        <location evidence="1">Cytoskeleton</location>
    </subcellularLocation>
</comment>
<comment type="PTM">
    <text evidence="1">Phosphorylated by MAP kinases.</text>
</comment>
<comment type="polymorphism">
    <text>Several isoforms of the allergen exist due to polymorphism.</text>
</comment>
<comment type="allergen">
    <text>Causes an allergic reaction in human.</text>
</comment>
<comment type="miscellaneous">
    <text evidence="3">The variability of the residues taking part of IgE-binding epitopes might be responsible of the difference in cross-reactivity among olive pollen cultivars, and between distantly related pollen species, leading to a variable range of allergy reactions among atopic patients.</text>
</comment>
<comment type="similarity">
    <text evidence="2">Belongs to the profilin family.</text>
</comment>
<feature type="initiator methionine" description="Removed" evidence="1">
    <location>
        <position position="1"/>
    </location>
</feature>
<feature type="chain" id="PRO_0000425028" description="Profilin-3">
    <location>
        <begin position="2"/>
        <end position="134"/>
    </location>
</feature>
<feature type="short sequence motif" description="Involved in PIP2 interaction">
    <location>
        <begin position="84"/>
        <end position="100"/>
    </location>
</feature>
<feature type="modified residue" description="Phosphothreonine" evidence="1">
    <location>
        <position position="114"/>
    </location>
</feature>
<feature type="disulfide bond" evidence="3">
    <location>
        <begin position="13"/>
        <end position="118"/>
    </location>
</feature>
<name>PROBK_OLEEU</name>
<evidence type="ECO:0000250" key="1"/>
<evidence type="ECO:0000305" key="2"/>
<evidence type="ECO:0000305" key="3">
    <source>
    </source>
</evidence>